<comment type="subcellular location">
    <subcellularLocation>
        <location evidence="1">Cytoplasm</location>
        <location evidence="1">Cytosol</location>
    </subcellularLocation>
    <text evidence="1">Intracellular soluble fraction.</text>
</comment>
<comment type="induction">
    <text evidence="1">By zinc depletion.</text>
</comment>
<comment type="similarity">
    <text evidence="3">Belongs to the VEL1 family.</text>
</comment>
<dbReference type="EMBL" id="CU329670">
    <property type="protein sequence ID" value="CAB69627.1"/>
    <property type="molecule type" value="Genomic_DNA"/>
</dbReference>
<dbReference type="PIR" id="T50277">
    <property type="entry name" value="T50277"/>
</dbReference>
<dbReference type="RefSeq" id="NP_592777.1">
    <property type="nucleotide sequence ID" value="NM_001018177.1"/>
</dbReference>
<dbReference type="BioGRID" id="279528">
    <property type="interactions" value="49"/>
</dbReference>
<dbReference type="STRING" id="284812.Q9P7U4"/>
<dbReference type="iPTMnet" id="Q9P7U4"/>
<dbReference type="PaxDb" id="4896-SPAC977.05c.1"/>
<dbReference type="EnsemblFungi" id="SPAC977.05c.1">
    <property type="protein sequence ID" value="SPAC977.05c.1:pep"/>
    <property type="gene ID" value="SPAC977.05c"/>
</dbReference>
<dbReference type="KEGG" id="spo:2543096"/>
<dbReference type="PomBase" id="SPAC977.05c"/>
<dbReference type="VEuPathDB" id="FungiDB:SPAC977.05c"/>
<dbReference type="eggNOG" id="ENOG502RZUS">
    <property type="taxonomic scope" value="Eukaryota"/>
</dbReference>
<dbReference type="HOGENOM" id="CLU_1349595_0_0_1"/>
<dbReference type="InParanoid" id="Q9P7U4"/>
<dbReference type="OMA" id="DTKNFSP"/>
<dbReference type="PhylomeDB" id="Q9P7U4"/>
<dbReference type="PRO" id="PR:Q9P7U4"/>
<dbReference type="Proteomes" id="UP000002485">
    <property type="component" value="Chromosome I"/>
</dbReference>
<dbReference type="GO" id="GO:0005829">
    <property type="term" value="C:cytosol"/>
    <property type="evidence" value="ECO:0007669"/>
    <property type="project" value="UniProtKB-SubCell"/>
</dbReference>
<dbReference type="GO" id="GO:0005783">
    <property type="term" value="C:endoplasmic reticulum"/>
    <property type="evidence" value="ECO:0007005"/>
    <property type="project" value="PomBase"/>
</dbReference>
<dbReference type="InterPro" id="IPR019435">
    <property type="entry name" value="Vel1-like"/>
</dbReference>
<dbReference type="Pfam" id="PF10339">
    <property type="entry name" value="Vel1p"/>
    <property type="match status" value="1"/>
</dbReference>
<organism>
    <name type="scientific">Schizosaccharomyces pombe (strain 972 / ATCC 24843)</name>
    <name type="common">Fission yeast</name>
    <dbReference type="NCBI Taxonomy" id="284812"/>
    <lineage>
        <taxon>Eukaryota</taxon>
        <taxon>Fungi</taxon>
        <taxon>Dikarya</taxon>
        <taxon>Ascomycota</taxon>
        <taxon>Taphrinomycotina</taxon>
        <taxon>Schizosaccharomycetes</taxon>
        <taxon>Schizosaccharomycetales</taxon>
        <taxon>Schizosaccharomycetaceae</taxon>
        <taxon>Schizosaccharomyces</taxon>
    </lineage>
</organism>
<accession>Q9P7U4</accession>
<evidence type="ECO:0000250" key="1"/>
<evidence type="ECO:0000255" key="2"/>
<evidence type="ECO:0000305" key="3"/>
<feature type="signal peptide" evidence="2">
    <location>
        <begin position="1"/>
        <end position="17"/>
    </location>
</feature>
<feature type="chain" id="PRO_0000326040" description="VEL1-related protein AC977.05c">
    <location>
        <begin position="18"/>
        <end position="204"/>
    </location>
</feature>
<keyword id="KW-0963">Cytoplasm</keyword>
<keyword id="KW-1185">Reference proteome</keyword>
<keyword id="KW-0732">Signal</keyword>
<keyword id="KW-0862">Zinc</keyword>
<sequence>MIFKNLISLFFIGLATAIRFNLTDLECSRLRGPHCGTYLLKVVGTNATYVGEKSFIGLDALTESKGEFFQRMLEQEPRLIPRLFTIAENDTANFTPLTFTTYLKTCNPQSIENAMIPFVNTVTSEISFDAWAYTAQNSSRITGLSNQLMNSTLYNVQVATCTPGFSALLLDSPTINVFNNEEGMPSWCQPIELIPVCPLDEGFN</sequence>
<name>YI75_SCHPO</name>
<reference key="1">
    <citation type="journal article" date="2002" name="Nature">
        <title>The genome sequence of Schizosaccharomyces pombe.</title>
        <authorList>
            <person name="Wood V."/>
            <person name="Gwilliam R."/>
            <person name="Rajandream M.A."/>
            <person name="Lyne M.H."/>
            <person name="Lyne R."/>
            <person name="Stewart A."/>
            <person name="Sgouros J.G."/>
            <person name="Peat N."/>
            <person name="Hayles J."/>
            <person name="Baker S.G."/>
            <person name="Basham D."/>
            <person name="Bowman S."/>
            <person name="Brooks K."/>
            <person name="Brown D."/>
            <person name="Brown S."/>
            <person name="Chillingworth T."/>
            <person name="Churcher C.M."/>
            <person name="Collins M."/>
            <person name="Connor R."/>
            <person name="Cronin A."/>
            <person name="Davis P."/>
            <person name="Feltwell T."/>
            <person name="Fraser A."/>
            <person name="Gentles S."/>
            <person name="Goble A."/>
            <person name="Hamlin N."/>
            <person name="Harris D.E."/>
            <person name="Hidalgo J."/>
            <person name="Hodgson G."/>
            <person name="Holroyd S."/>
            <person name="Hornsby T."/>
            <person name="Howarth S."/>
            <person name="Huckle E.J."/>
            <person name="Hunt S."/>
            <person name="Jagels K."/>
            <person name="James K.D."/>
            <person name="Jones L."/>
            <person name="Jones M."/>
            <person name="Leather S."/>
            <person name="McDonald S."/>
            <person name="McLean J."/>
            <person name="Mooney P."/>
            <person name="Moule S."/>
            <person name="Mungall K.L."/>
            <person name="Murphy L.D."/>
            <person name="Niblett D."/>
            <person name="Odell C."/>
            <person name="Oliver K."/>
            <person name="O'Neil S."/>
            <person name="Pearson D."/>
            <person name="Quail M.A."/>
            <person name="Rabbinowitsch E."/>
            <person name="Rutherford K.M."/>
            <person name="Rutter S."/>
            <person name="Saunders D."/>
            <person name="Seeger K."/>
            <person name="Sharp S."/>
            <person name="Skelton J."/>
            <person name="Simmonds M.N."/>
            <person name="Squares R."/>
            <person name="Squares S."/>
            <person name="Stevens K."/>
            <person name="Taylor K."/>
            <person name="Taylor R.G."/>
            <person name="Tivey A."/>
            <person name="Walsh S.V."/>
            <person name="Warren T."/>
            <person name="Whitehead S."/>
            <person name="Woodward J.R."/>
            <person name="Volckaert G."/>
            <person name="Aert R."/>
            <person name="Robben J."/>
            <person name="Grymonprez B."/>
            <person name="Weltjens I."/>
            <person name="Vanstreels E."/>
            <person name="Rieger M."/>
            <person name="Schaefer M."/>
            <person name="Mueller-Auer S."/>
            <person name="Gabel C."/>
            <person name="Fuchs M."/>
            <person name="Duesterhoeft A."/>
            <person name="Fritzc C."/>
            <person name="Holzer E."/>
            <person name="Moestl D."/>
            <person name="Hilbert H."/>
            <person name="Borzym K."/>
            <person name="Langer I."/>
            <person name="Beck A."/>
            <person name="Lehrach H."/>
            <person name="Reinhardt R."/>
            <person name="Pohl T.M."/>
            <person name="Eger P."/>
            <person name="Zimmermann W."/>
            <person name="Wedler H."/>
            <person name="Wambutt R."/>
            <person name="Purnelle B."/>
            <person name="Goffeau A."/>
            <person name="Cadieu E."/>
            <person name="Dreano S."/>
            <person name="Gloux S."/>
            <person name="Lelaure V."/>
            <person name="Mottier S."/>
            <person name="Galibert F."/>
            <person name="Aves S.J."/>
            <person name="Xiang Z."/>
            <person name="Hunt C."/>
            <person name="Moore K."/>
            <person name="Hurst S.M."/>
            <person name="Lucas M."/>
            <person name="Rochet M."/>
            <person name="Gaillardin C."/>
            <person name="Tallada V.A."/>
            <person name="Garzon A."/>
            <person name="Thode G."/>
            <person name="Daga R.R."/>
            <person name="Cruzado L."/>
            <person name="Jimenez J."/>
            <person name="Sanchez M."/>
            <person name="del Rey F."/>
            <person name="Benito J."/>
            <person name="Dominguez A."/>
            <person name="Revuelta J.L."/>
            <person name="Moreno S."/>
            <person name="Armstrong J."/>
            <person name="Forsburg S.L."/>
            <person name="Cerutti L."/>
            <person name="Lowe T."/>
            <person name="McCombie W.R."/>
            <person name="Paulsen I."/>
            <person name="Potashkin J."/>
            <person name="Shpakovski G.V."/>
            <person name="Ussery D."/>
            <person name="Barrell B.G."/>
            <person name="Nurse P."/>
        </authorList>
    </citation>
    <scope>NUCLEOTIDE SEQUENCE [LARGE SCALE GENOMIC DNA]</scope>
    <source>
        <strain>972 / ATCC 24843</strain>
    </source>
</reference>
<protein>
    <recommendedName>
        <fullName>VEL1-related protein AC977.05c</fullName>
    </recommendedName>
</protein>
<proteinExistence type="inferred from homology"/>
<gene>
    <name type="ORF">SPAC977.05c</name>
</gene>